<dbReference type="EC" id="4.2.1.109" evidence="1"/>
<dbReference type="EMBL" id="FM209186">
    <property type="protein sequence ID" value="CAW28371.1"/>
    <property type="molecule type" value="Genomic_DNA"/>
</dbReference>
<dbReference type="RefSeq" id="WP_012614300.1">
    <property type="nucleotide sequence ID" value="NC_011770.1"/>
</dbReference>
<dbReference type="SMR" id="B7UV38"/>
<dbReference type="KEGG" id="pag:PLES_36441"/>
<dbReference type="HOGENOM" id="CLU_006033_4_1_6"/>
<dbReference type="UniPathway" id="UPA00904">
    <property type="reaction ID" value="UER00875"/>
</dbReference>
<dbReference type="GO" id="GO:0005737">
    <property type="term" value="C:cytoplasm"/>
    <property type="evidence" value="ECO:0007669"/>
    <property type="project" value="InterPro"/>
</dbReference>
<dbReference type="GO" id="GO:0046570">
    <property type="term" value="F:methylthioribulose 1-phosphate dehydratase activity"/>
    <property type="evidence" value="ECO:0007669"/>
    <property type="project" value="UniProtKB-UniRule"/>
</dbReference>
<dbReference type="GO" id="GO:0008270">
    <property type="term" value="F:zinc ion binding"/>
    <property type="evidence" value="ECO:0007669"/>
    <property type="project" value="UniProtKB-UniRule"/>
</dbReference>
<dbReference type="GO" id="GO:0019509">
    <property type="term" value="P:L-methionine salvage from methylthioadenosine"/>
    <property type="evidence" value="ECO:0007669"/>
    <property type="project" value="UniProtKB-UniRule"/>
</dbReference>
<dbReference type="GO" id="GO:0005996">
    <property type="term" value="P:monosaccharide metabolic process"/>
    <property type="evidence" value="ECO:0007669"/>
    <property type="project" value="UniProtKB-ARBA"/>
</dbReference>
<dbReference type="FunFam" id="3.40.225.10:FF:000007">
    <property type="entry name" value="Methylthioribulose-1-phosphate dehydratase"/>
    <property type="match status" value="1"/>
</dbReference>
<dbReference type="Gene3D" id="3.40.225.10">
    <property type="entry name" value="Class II aldolase/adducin N-terminal domain"/>
    <property type="match status" value="1"/>
</dbReference>
<dbReference type="HAMAP" id="MF_01677">
    <property type="entry name" value="Salvage_MtnB"/>
    <property type="match status" value="1"/>
</dbReference>
<dbReference type="InterPro" id="IPR001303">
    <property type="entry name" value="Aldolase_II/adducin_N"/>
</dbReference>
<dbReference type="InterPro" id="IPR036409">
    <property type="entry name" value="Aldolase_II/adducin_N_sf"/>
</dbReference>
<dbReference type="InterPro" id="IPR017714">
    <property type="entry name" value="MethylthioRu-1-P_deHdtase_MtnB"/>
</dbReference>
<dbReference type="NCBIfam" id="NF006672">
    <property type="entry name" value="PRK09220.1"/>
    <property type="match status" value="1"/>
</dbReference>
<dbReference type="NCBIfam" id="TIGR03328">
    <property type="entry name" value="salvage_mtnB"/>
    <property type="match status" value="1"/>
</dbReference>
<dbReference type="PANTHER" id="PTHR10640">
    <property type="entry name" value="METHYLTHIORIBULOSE-1-PHOSPHATE DEHYDRATASE"/>
    <property type="match status" value="1"/>
</dbReference>
<dbReference type="PANTHER" id="PTHR10640:SF7">
    <property type="entry name" value="METHYLTHIORIBULOSE-1-PHOSPHATE DEHYDRATASE"/>
    <property type="match status" value="1"/>
</dbReference>
<dbReference type="Pfam" id="PF00596">
    <property type="entry name" value="Aldolase_II"/>
    <property type="match status" value="1"/>
</dbReference>
<dbReference type="SMART" id="SM01007">
    <property type="entry name" value="Aldolase_II"/>
    <property type="match status" value="1"/>
</dbReference>
<dbReference type="SUPFAM" id="SSF53639">
    <property type="entry name" value="AraD/HMP-PK domain-like"/>
    <property type="match status" value="1"/>
</dbReference>
<organism>
    <name type="scientific">Pseudomonas aeruginosa (strain LESB58)</name>
    <dbReference type="NCBI Taxonomy" id="557722"/>
    <lineage>
        <taxon>Bacteria</taxon>
        <taxon>Pseudomonadati</taxon>
        <taxon>Pseudomonadota</taxon>
        <taxon>Gammaproteobacteria</taxon>
        <taxon>Pseudomonadales</taxon>
        <taxon>Pseudomonadaceae</taxon>
        <taxon>Pseudomonas</taxon>
    </lineage>
</organism>
<accession>B7UV38</accession>
<feature type="chain" id="PRO_1000187349" description="Methylthioribulose-1-phosphate dehydratase">
    <location>
        <begin position="1"/>
        <end position="205"/>
    </location>
</feature>
<feature type="binding site" evidence="1">
    <location>
        <position position="96"/>
    </location>
    <ligand>
        <name>Zn(2+)</name>
        <dbReference type="ChEBI" id="CHEBI:29105"/>
    </ligand>
</feature>
<feature type="binding site" evidence="1">
    <location>
        <position position="98"/>
    </location>
    <ligand>
        <name>Zn(2+)</name>
        <dbReference type="ChEBI" id="CHEBI:29105"/>
    </ligand>
</feature>
<evidence type="ECO:0000255" key="1">
    <source>
        <dbReference type="HAMAP-Rule" id="MF_01677"/>
    </source>
</evidence>
<protein>
    <recommendedName>
        <fullName evidence="1">Methylthioribulose-1-phosphate dehydratase</fullName>
        <shortName evidence="1">MTRu-1-P dehydratase</shortName>
        <ecNumber evidence="1">4.2.1.109</ecNumber>
    </recommendedName>
</protein>
<sequence>MNDNREQLTQQIIDAGRFLYGRGWSPATSSNYSARLDEQRALLTVSGKHKGQLGFDDVLATDLAGNSLEPGKKPSAETLLHTQLYAWNPAIGAVLHTHSVNATVLSRLVRGDRLVLQDYELQKAFAGVTTHEGQVEVPIFDNDQDIARLASRVQPWLEAYPHCPGYLIRGHGLYTWGARMSDALRQVEAFEFLFECELKVLSLSR</sequence>
<name>MTNB_PSEA8</name>
<comment type="function">
    <text evidence="1">Catalyzes the dehydration of methylthioribulose-1-phosphate (MTRu-1-P) into 2,3-diketo-5-methylthiopentyl-1-phosphate (DK-MTP-1-P).</text>
</comment>
<comment type="catalytic activity">
    <reaction evidence="1">
        <text>5-(methylsulfanyl)-D-ribulose 1-phosphate = 5-methylsulfanyl-2,3-dioxopentyl phosphate + H2O</text>
        <dbReference type="Rhea" id="RHEA:15549"/>
        <dbReference type="ChEBI" id="CHEBI:15377"/>
        <dbReference type="ChEBI" id="CHEBI:58548"/>
        <dbReference type="ChEBI" id="CHEBI:58828"/>
        <dbReference type="EC" id="4.2.1.109"/>
    </reaction>
</comment>
<comment type="cofactor">
    <cofactor evidence="1">
        <name>Zn(2+)</name>
        <dbReference type="ChEBI" id="CHEBI:29105"/>
    </cofactor>
    <text evidence="1">Binds 1 zinc ion per subunit.</text>
</comment>
<comment type="pathway">
    <text evidence="1">Amino-acid biosynthesis; L-methionine biosynthesis via salvage pathway; L-methionine from S-methyl-5-thio-alpha-D-ribose 1-phosphate: step 2/6.</text>
</comment>
<comment type="similarity">
    <text evidence="1">Belongs to the aldolase class II family. MtnB subfamily.</text>
</comment>
<keyword id="KW-0028">Amino-acid biosynthesis</keyword>
<keyword id="KW-0456">Lyase</keyword>
<keyword id="KW-0479">Metal-binding</keyword>
<keyword id="KW-0486">Methionine biosynthesis</keyword>
<keyword id="KW-0862">Zinc</keyword>
<gene>
    <name evidence="1" type="primary">mtnB</name>
    <name type="ordered locus">PLES_36441</name>
</gene>
<proteinExistence type="inferred from homology"/>
<reference key="1">
    <citation type="journal article" date="2009" name="Genome Res.">
        <title>Newly introduced genomic prophage islands are critical determinants of in vivo competitiveness in the Liverpool epidemic strain of Pseudomonas aeruginosa.</title>
        <authorList>
            <person name="Winstanley C."/>
            <person name="Langille M.G.I."/>
            <person name="Fothergill J.L."/>
            <person name="Kukavica-Ibrulj I."/>
            <person name="Paradis-Bleau C."/>
            <person name="Sanschagrin F."/>
            <person name="Thomson N.R."/>
            <person name="Winsor G.L."/>
            <person name="Quail M.A."/>
            <person name="Lennard N."/>
            <person name="Bignell A."/>
            <person name="Clarke L."/>
            <person name="Seeger K."/>
            <person name="Saunders D."/>
            <person name="Harris D."/>
            <person name="Parkhill J."/>
            <person name="Hancock R.E.W."/>
            <person name="Brinkman F.S.L."/>
            <person name="Levesque R.C."/>
        </authorList>
    </citation>
    <scope>NUCLEOTIDE SEQUENCE [LARGE SCALE GENOMIC DNA]</scope>
    <source>
        <strain>LESB58</strain>
    </source>
</reference>